<proteinExistence type="inferred from homology"/>
<comment type="subunit">
    <text evidence="1">Part of the 30S ribosomal subunit.</text>
</comment>
<comment type="subcellular location">
    <subcellularLocation>
        <location>Plastid</location>
        <location>Chloroplast</location>
    </subcellularLocation>
</comment>
<comment type="similarity">
    <text evidence="2">Belongs to the universal ribosomal protein uS15 family.</text>
</comment>
<gene>
    <name type="primary">rps15</name>
</gene>
<sequence length="90" mass="10816">MVKNSFISAISQEEKEKNKGSTEFQILNFTKRIRRLTSHLELHKKDYLSQRGLRKILGKRQRLLTYLSNKNRVRYKELIGQLDIREPKTR</sequence>
<evidence type="ECO:0000250" key="1"/>
<evidence type="ECO:0000305" key="2"/>
<dbReference type="EMBL" id="DQ887677">
    <property type="protein sequence ID" value="ABI14519.1"/>
    <property type="molecule type" value="Genomic_DNA"/>
</dbReference>
<dbReference type="RefSeq" id="YP_784521.1">
    <property type="nucleotide sequence ID" value="NC_008457.1"/>
</dbReference>
<dbReference type="SMR" id="Q06GL2"/>
<dbReference type="GeneID" id="4363698"/>
<dbReference type="GO" id="GO:0009507">
    <property type="term" value="C:chloroplast"/>
    <property type="evidence" value="ECO:0007669"/>
    <property type="project" value="UniProtKB-SubCell"/>
</dbReference>
<dbReference type="GO" id="GO:1990904">
    <property type="term" value="C:ribonucleoprotein complex"/>
    <property type="evidence" value="ECO:0007669"/>
    <property type="project" value="UniProtKB-KW"/>
</dbReference>
<dbReference type="GO" id="GO:0005840">
    <property type="term" value="C:ribosome"/>
    <property type="evidence" value="ECO:0007669"/>
    <property type="project" value="UniProtKB-KW"/>
</dbReference>
<dbReference type="GO" id="GO:0003735">
    <property type="term" value="F:structural constituent of ribosome"/>
    <property type="evidence" value="ECO:0007669"/>
    <property type="project" value="InterPro"/>
</dbReference>
<dbReference type="GO" id="GO:0006412">
    <property type="term" value="P:translation"/>
    <property type="evidence" value="ECO:0007669"/>
    <property type="project" value="UniProtKB-UniRule"/>
</dbReference>
<dbReference type="CDD" id="cd00353">
    <property type="entry name" value="Ribosomal_S15p_S13e"/>
    <property type="match status" value="1"/>
</dbReference>
<dbReference type="Gene3D" id="1.10.287.10">
    <property type="entry name" value="S15/NS1, RNA-binding"/>
    <property type="match status" value="1"/>
</dbReference>
<dbReference type="HAMAP" id="MF_01343_B">
    <property type="entry name" value="Ribosomal_uS15_B"/>
    <property type="match status" value="1"/>
</dbReference>
<dbReference type="InterPro" id="IPR000589">
    <property type="entry name" value="Ribosomal_uS15"/>
</dbReference>
<dbReference type="InterPro" id="IPR005290">
    <property type="entry name" value="Ribosomal_uS15_bac-type"/>
</dbReference>
<dbReference type="InterPro" id="IPR009068">
    <property type="entry name" value="uS15_NS1_RNA-bd_sf"/>
</dbReference>
<dbReference type="NCBIfam" id="TIGR00952">
    <property type="entry name" value="S15_bact"/>
    <property type="match status" value="1"/>
</dbReference>
<dbReference type="PANTHER" id="PTHR23321">
    <property type="entry name" value="RIBOSOMAL PROTEIN S15, BACTERIAL AND ORGANELLAR"/>
    <property type="match status" value="1"/>
</dbReference>
<dbReference type="PANTHER" id="PTHR23321:SF26">
    <property type="entry name" value="SMALL RIBOSOMAL SUBUNIT PROTEIN US15M"/>
    <property type="match status" value="1"/>
</dbReference>
<dbReference type="Pfam" id="PF00312">
    <property type="entry name" value="Ribosomal_S15"/>
    <property type="match status" value="1"/>
</dbReference>
<dbReference type="SMART" id="SM01387">
    <property type="entry name" value="Ribosomal_S15"/>
    <property type="match status" value="1"/>
</dbReference>
<dbReference type="SUPFAM" id="SSF47060">
    <property type="entry name" value="S15/NS1 RNA-binding domain"/>
    <property type="match status" value="1"/>
</dbReference>
<dbReference type="PROSITE" id="PS00362">
    <property type="entry name" value="RIBOSOMAL_S15"/>
    <property type="match status" value="1"/>
</dbReference>
<geneLocation type="chloroplast"/>
<accession>Q06GL2</accession>
<name>RR15_PIPCE</name>
<keyword id="KW-0150">Chloroplast</keyword>
<keyword id="KW-0934">Plastid</keyword>
<keyword id="KW-0687">Ribonucleoprotein</keyword>
<keyword id="KW-0689">Ribosomal protein</keyword>
<feature type="chain" id="PRO_0000276977" description="Small ribosomal subunit protein uS15c">
    <location>
        <begin position="1"/>
        <end position="90"/>
    </location>
</feature>
<reference key="1">
    <citation type="journal article" date="2006" name="BMC Evol. Biol.">
        <title>Complete plastid genome sequences of Drimys, Liriodendron, and Piper: implications for the phylogenetic relationships of magnoliids.</title>
        <authorList>
            <person name="Cai Z."/>
            <person name="Penaflor C."/>
            <person name="Kuehl J.V."/>
            <person name="Leebens-Mack J."/>
            <person name="Carlson J.E."/>
            <person name="dePamphilis C.W."/>
            <person name="Boore J.L."/>
            <person name="Jansen R.K."/>
        </authorList>
    </citation>
    <scope>NUCLEOTIDE SEQUENCE [LARGE SCALE GENOMIC DNA]</scope>
</reference>
<organism>
    <name type="scientific">Piper cenocladum</name>
    <name type="common">Ant piper</name>
    <dbReference type="NCBI Taxonomy" id="398741"/>
    <lineage>
        <taxon>Eukaryota</taxon>
        <taxon>Viridiplantae</taxon>
        <taxon>Streptophyta</taxon>
        <taxon>Embryophyta</taxon>
        <taxon>Tracheophyta</taxon>
        <taxon>Spermatophyta</taxon>
        <taxon>Magnoliopsida</taxon>
        <taxon>Magnoliidae</taxon>
        <taxon>Piperales</taxon>
        <taxon>Piperaceae</taxon>
        <taxon>Piper</taxon>
    </lineage>
</organism>
<protein>
    <recommendedName>
        <fullName evidence="2">Small ribosomal subunit protein uS15c</fullName>
    </recommendedName>
    <alternativeName>
        <fullName>30S ribosomal protein S15, chloroplastic</fullName>
    </alternativeName>
</protein>